<organism>
    <name type="scientific">Arabidopsis thaliana</name>
    <name type="common">Mouse-ear cress</name>
    <dbReference type="NCBI Taxonomy" id="3702"/>
    <lineage>
        <taxon>Eukaryota</taxon>
        <taxon>Viridiplantae</taxon>
        <taxon>Streptophyta</taxon>
        <taxon>Embryophyta</taxon>
        <taxon>Tracheophyta</taxon>
        <taxon>Spermatophyta</taxon>
        <taxon>Magnoliopsida</taxon>
        <taxon>eudicotyledons</taxon>
        <taxon>Gunneridae</taxon>
        <taxon>Pentapetalae</taxon>
        <taxon>rosids</taxon>
        <taxon>malvids</taxon>
        <taxon>Brassicales</taxon>
        <taxon>Brassicaceae</taxon>
        <taxon>Camelineae</taxon>
        <taxon>Arabidopsis</taxon>
    </lineage>
</organism>
<gene>
    <name evidence="8" type="primary">LTPG11</name>
    <name evidence="6 7" type="synonym">XYP2</name>
    <name evidence="10" type="ordered locus">At2g13820</name>
    <name evidence="11" type="ORF">F17L24.13</name>
</gene>
<dbReference type="EMBL" id="AC006218">
    <property type="protein sequence ID" value="AAD15432.1"/>
    <property type="molecule type" value="Genomic_DNA"/>
</dbReference>
<dbReference type="EMBL" id="AC006436">
    <property type="protein sequence ID" value="AAM15251.1"/>
    <property type="molecule type" value="Genomic_DNA"/>
</dbReference>
<dbReference type="EMBL" id="CP002685">
    <property type="protein sequence ID" value="AEC06262.1"/>
    <property type="molecule type" value="Genomic_DNA"/>
</dbReference>
<dbReference type="EMBL" id="CP002685">
    <property type="protein sequence ID" value="AEC06263.1"/>
    <property type="molecule type" value="Genomic_DNA"/>
</dbReference>
<dbReference type="EMBL" id="BT003062">
    <property type="protein sequence ID" value="AAO23627.1"/>
    <property type="molecule type" value="mRNA"/>
</dbReference>
<dbReference type="EMBL" id="AY086354">
    <property type="protein sequence ID" value="AAM64422.1"/>
    <property type="molecule type" value="mRNA"/>
</dbReference>
<dbReference type="EMBL" id="AK227370">
    <property type="protein sequence ID" value="BAE99377.1"/>
    <property type="molecule type" value="mRNA"/>
</dbReference>
<dbReference type="PIR" id="B84511">
    <property type="entry name" value="B84511"/>
</dbReference>
<dbReference type="RefSeq" id="NP_179002.1">
    <molecule id="Q9ZQI8-1"/>
    <property type="nucleotide sequence ID" value="NM_126958.4"/>
</dbReference>
<dbReference type="RefSeq" id="NP_973450.1">
    <molecule id="Q9ZQI8-2"/>
    <property type="nucleotide sequence ID" value="NM_201721.2"/>
</dbReference>
<dbReference type="SMR" id="Q9ZQI8"/>
<dbReference type="BioGRID" id="1226">
    <property type="interactions" value="1"/>
</dbReference>
<dbReference type="FunCoup" id="Q9ZQI8">
    <property type="interactions" value="91"/>
</dbReference>
<dbReference type="STRING" id="3702.Q9ZQI8"/>
<dbReference type="GlyGen" id="Q9ZQI8">
    <property type="glycosylation" value="1 site"/>
</dbReference>
<dbReference type="iPTMnet" id="Q9ZQI8"/>
<dbReference type="PaxDb" id="3702-AT2G13820.1"/>
<dbReference type="ProteomicsDB" id="251068">
    <molecule id="Q9ZQI8-1"/>
</dbReference>
<dbReference type="EnsemblPlants" id="AT2G13820.1">
    <molecule id="Q9ZQI8-1"/>
    <property type="protein sequence ID" value="AT2G13820.1"/>
    <property type="gene ID" value="AT2G13820"/>
</dbReference>
<dbReference type="EnsemblPlants" id="AT2G13820.2">
    <molecule id="Q9ZQI8-2"/>
    <property type="protein sequence ID" value="AT2G13820.2"/>
    <property type="gene ID" value="AT2G13820"/>
</dbReference>
<dbReference type="GeneID" id="815865"/>
<dbReference type="Gramene" id="AT2G13820.1">
    <molecule id="Q9ZQI8-1"/>
    <property type="protein sequence ID" value="AT2G13820.1"/>
    <property type="gene ID" value="AT2G13820"/>
</dbReference>
<dbReference type="Gramene" id="AT2G13820.2">
    <molecule id="Q9ZQI8-2"/>
    <property type="protein sequence ID" value="AT2G13820.2"/>
    <property type="gene ID" value="AT2G13820"/>
</dbReference>
<dbReference type="KEGG" id="ath:AT2G13820"/>
<dbReference type="Araport" id="AT2G13820"/>
<dbReference type="TAIR" id="AT2G13820">
    <property type="gene designation" value="XYP2"/>
</dbReference>
<dbReference type="eggNOG" id="ENOG502S1ZN">
    <property type="taxonomic scope" value="Eukaryota"/>
</dbReference>
<dbReference type="HOGENOM" id="CLU_089796_5_2_1"/>
<dbReference type="InParanoid" id="Q9ZQI8"/>
<dbReference type="OrthoDB" id="659547at2759"/>
<dbReference type="PhylomeDB" id="Q9ZQI8"/>
<dbReference type="PRO" id="PR:Q9ZQI8"/>
<dbReference type="Proteomes" id="UP000006548">
    <property type="component" value="Chromosome 2"/>
</dbReference>
<dbReference type="ExpressionAtlas" id="Q9ZQI8">
    <property type="expression patterns" value="baseline and differential"/>
</dbReference>
<dbReference type="GO" id="GO:0005576">
    <property type="term" value="C:extracellular region"/>
    <property type="evidence" value="ECO:0007669"/>
    <property type="project" value="UniProtKB-SubCell"/>
</dbReference>
<dbReference type="GO" id="GO:0005886">
    <property type="term" value="C:plasma membrane"/>
    <property type="evidence" value="ECO:0007669"/>
    <property type="project" value="UniProtKB-SubCell"/>
</dbReference>
<dbReference type="GO" id="GO:0098552">
    <property type="term" value="C:side of membrane"/>
    <property type="evidence" value="ECO:0007669"/>
    <property type="project" value="UniProtKB-KW"/>
</dbReference>
<dbReference type="GO" id="GO:0008289">
    <property type="term" value="F:lipid binding"/>
    <property type="evidence" value="ECO:0007669"/>
    <property type="project" value="InterPro"/>
</dbReference>
<dbReference type="GO" id="GO:0006869">
    <property type="term" value="P:lipid transport"/>
    <property type="evidence" value="ECO:0007669"/>
    <property type="project" value="InterPro"/>
</dbReference>
<dbReference type="GO" id="GO:0010089">
    <property type="term" value="P:xylem development"/>
    <property type="evidence" value="ECO:0000315"/>
    <property type="project" value="UniProtKB"/>
</dbReference>
<dbReference type="CDD" id="cd00010">
    <property type="entry name" value="AAI_LTSS"/>
    <property type="match status" value="1"/>
</dbReference>
<dbReference type="FunFam" id="1.10.110.10:FF:000001">
    <property type="entry name" value="Bifunctional inhibitor/lipid-transfer protein/seed storage 2S albumin superfamily protein"/>
    <property type="match status" value="1"/>
</dbReference>
<dbReference type="Gene3D" id="1.10.110.10">
    <property type="entry name" value="Plant lipid-transfer and hydrophobic proteins"/>
    <property type="match status" value="1"/>
</dbReference>
<dbReference type="InterPro" id="IPR036312">
    <property type="entry name" value="Bifun_inhib/LTP/seed_sf"/>
</dbReference>
<dbReference type="InterPro" id="IPR016140">
    <property type="entry name" value="Bifunc_inhib/LTP/seed_store"/>
</dbReference>
<dbReference type="InterPro" id="IPR043325">
    <property type="entry name" value="LTSS"/>
</dbReference>
<dbReference type="InterPro" id="IPR000528">
    <property type="entry name" value="Plant_nsLTP"/>
</dbReference>
<dbReference type="PANTHER" id="PTHR33044">
    <property type="entry name" value="BIFUNCTIONAL INHIBITOR/LIPID-TRANSFER PROTEIN/SEED STORAGE 2S ALBUMIN SUPERFAMILY PROTEIN-RELATED"/>
    <property type="match status" value="1"/>
</dbReference>
<dbReference type="Pfam" id="PF14368">
    <property type="entry name" value="LTP_2"/>
    <property type="match status" value="1"/>
</dbReference>
<dbReference type="PRINTS" id="PR00382">
    <property type="entry name" value="LIPIDTRNSFER"/>
</dbReference>
<dbReference type="SMART" id="SM00499">
    <property type="entry name" value="AAI"/>
    <property type="match status" value="1"/>
</dbReference>
<dbReference type="SUPFAM" id="SSF47699">
    <property type="entry name" value="Bifunctional inhibitor/lipid-transfer protein/seed storage 2S albumin"/>
    <property type="match status" value="1"/>
</dbReference>
<feature type="signal peptide" evidence="3">
    <location>
        <begin position="1"/>
        <end position="23"/>
    </location>
</feature>
<feature type="chain" id="PRO_0000259454" description="Non-specific lipid transfer protein GPI-anchored 11">
    <location>
        <begin position="24"/>
        <end position="146"/>
    </location>
</feature>
<feature type="propeptide" id="PRO_0000259455" description="Removed in mature form" evidence="3">
    <location>
        <begin position="147"/>
        <end position="169"/>
    </location>
</feature>
<feature type="lipid moiety-binding region" description="GPI-anchor amidated serine" evidence="3">
    <location>
        <position position="146"/>
    </location>
</feature>
<feature type="disulfide bond" evidence="1">
    <location>
        <begin position="27"/>
        <end position="70"/>
    </location>
</feature>
<feature type="disulfide bond" evidence="1">
    <location>
        <begin position="37"/>
        <end position="54"/>
    </location>
</feature>
<feature type="disulfide bond" evidence="1">
    <location>
        <begin position="55"/>
        <end position="95"/>
    </location>
</feature>
<feature type="disulfide bond" evidence="1">
    <location>
        <begin position="68"/>
        <end position="105"/>
    </location>
</feature>
<feature type="splice variant" id="VSP_021392" description="In isoform 2." evidence="9">
    <original>LSPTAGAGAPALSSGANAATPVSSPRSSDASLLSVSFAFVIFMALISSFY</original>
    <variation>MCYFILKSRD</variation>
    <location>
        <begin position="120"/>
        <end position="169"/>
    </location>
</feature>
<feature type="sequence conflict" description="In Ref. 3; AAO23627 and 5; BAE99377." evidence="9" ref="3 5">
    <original>M</original>
    <variation>V</variation>
    <location>
        <position position="8"/>
    </location>
</feature>
<sequence length="169" mass="16816">MAYATILMIFSVVALMSGERAHAAVDCSSLILNMADCLSFVTSGSTVVKPEGTCCSGLKTVVRTGPECLCEAFKNSGSLGLTLDLSKAASLPSVCKVAAPPSARCGLSVSGDPPATAPGLSPTAGAGAPALSSGANAATPVSSPRSSDASLLSVSFAFVIFMALISSFY</sequence>
<name>LTG11_ARATH</name>
<keyword id="KW-0025">Alternative splicing</keyword>
<keyword id="KW-1003">Cell membrane</keyword>
<keyword id="KW-1015">Disulfide bond</keyword>
<keyword id="KW-0325">Glycoprotein</keyword>
<keyword id="KW-0336">GPI-anchor</keyword>
<keyword id="KW-0449">Lipoprotein</keyword>
<keyword id="KW-0472">Membrane</keyword>
<keyword id="KW-1185">Reference proteome</keyword>
<keyword id="KW-0964">Secreted</keyword>
<keyword id="KW-0732">Signal</keyword>
<protein>
    <recommendedName>
        <fullName evidence="8">Non-specific lipid transfer protein GPI-anchored 11</fullName>
        <shortName evidence="8">AtLTPG-11</shortName>
        <shortName evidence="8">Protein LTP-GPI-ANCHORED 11</shortName>
    </recommendedName>
    <alternativeName>
        <fullName evidence="6 7">Xylogen protein 2</fullName>
        <shortName evidence="6 7">AtXYP2</shortName>
    </alternativeName>
</protein>
<comment type="function">
    <text evidence="2 4 5">Probable lipid transfer protein (By similarity). Proteoglycan-like factor that exhibits xylogen activity consisting in mediating local and inductive cell-cell interactions required for xylem differentiation (PubMed:15215864, PubMed:21558309).</text>
</comment>
<comment type="subcellular location">
    <molecule>Isoform 1</molecule>
    <subcellularLocation>
        <location evidence="3">Cell membrane</location>
        <topology evidence="3">Lipid-anchor</topology>
        <topology evidence="3">GPI-anchor</topology>
    </subcellularLocation>
</comment>
<comment type="subcellular location">
    <molecule>Isoform 2</molecule>
    <subcellularLocation>
        <location evidence="9">Secreted</location>
    </subcellularLocation>
</comment>
<comment type="alternative products">
    <event type="alternative splicing"/>
    <isoform>
        <id>Q9ZQI8-1</id>
        <name>1</name>
        <sequence type="displayed"/>
    </isoform>
    <isoform>
        <id>Q9ZQI8-2</id>
        <name>2</name>
        <sequence type="described" ref="VSP_021392"/>
    </isoform>
</comment>
<comment type="tissue specificity">
    <text evidence="5">Expressed in a vascular-specific manner, mainly in roots, and, to a lower extent, in hypocotyls, seedlings stems and flowers.</text>
</comment>
<comment type="developmental stage">
    <text evidence="5">Preferentially expressed in vascular tissues such as the central cylinder, cotyledons of mature embryos and steles in seedlings roots (PubMed:21558309). Also accumulates in emerging root primordia (PubMed:21558309). In aerial parts, a weak expression is observed where new xylem tissues are formed, including the vasculature of young leaves, stem nodes and flower tori (PubMed:21558309).</text>
</comment>
<comment type="disruption phenotype">
    <text evidence="4">No obvious defects in morphology (PubMed:15215864). Plants lacking both XYP1 and XYP2 have morphological defects in vascular development; e.g. discontinuous and thicker veins with the improper interconnection of tracheary elements (TEs) (PubMed:15215864).</text>
</comment>
<comment type="miscellaneous">
    <molecule>Isoform 2</molecule>
    <text evidence="9">Has no GPI-anchor.</text>
</comment>
<comment type="similarity">
    <text evidence="9">Belongs to the plant LTP family.</text>
</comment>
<evidence type="ECO:0000250" key="1">
    <source>
        <dbReference type="UniProtKB" id="A0A0B4JDK1"/>
    </source>
</evidence>
<evidence type="ECO:0000250" key="2">
    <source>
        <dbReference type="UniProtKB" id="Q9C7F7"/>
    </source>
</evidence>
<evidence type="ECO:0000255" key="3"/>
<evidence type="ECO:0000269" key="4">
    <source>
    </source>
</evidence>
<evidence type="ECO:0000269" key="5">
    <source>
    </source>
</evidence>
<evidence type="ECO:0000303" key="6">
    <source>
    </source>
</evidence>
<evidence type="ECO:0000303" key="7">
    <source>
    </source>
</evidence>
<evidence type="ECO:0000303" key="8">
    <source>
    </source>
</evidence>
<evidence type="ECO:0000305" key="9"/>
<evidence type="ECO:0000312" key="10">
    <source>
        <dbReference type="Araport" id="AT2G13820"/>
    </source>
</evidence>
<evidence type="ECO:0000312" key="11">
    <source>
        <dbReference type="EMBL" id="AAD15432.1"/>
    </source>
</evidence>
<reference key="1">
    <citation type="journal article" date="1999" name="Nature">
        <title>Sequence and analysis of chromosome 2 of the plant Arabidopsis thaliana.</title>
        <authorList>
            <person name="Lin X."/>
            <person name="Kaul S."/>
            <person name="Rounsley S.D."/>
            <person name="Shea T.P."/>
            <person name="Benito M.-I."/>
            <person name="Town C.D."/>
            <person name="Fujii C.Y."/>
            <person name="Mason T.M."/>
            <person name="Bowman C.L."/>
            <person name="Barnstead M.E."/>
            <person name="Feldblyum T.V."/>
            <person name="Buell C.R."/>
            <person name="Ketchum K.A."/>
            <person name="Lee J.J."/>
            <person name="Ronning C.M."/>
            <person name="Koo H.L."/>
            <person name="Moffat K.S."/>
            <person name="Cronin L.A."/>
            <person name="Shen M."/>
            <person name="Pai G."/>
            <person name="Van Aken S."/>
            <person name="Umayam L."/>
            <person name="Tallon L.J."/>
            <person name="Gill J.E."/>
            <person name="Adams M.D."/>
            <person name="Carrera A.J."/>
            <person name="Creasy T.H."/>
            <person name="Goodman H.M."/>
            <person name="Somerville C.R."/>
            <person name="Copenhaver G.P."/>
            <person name="Preuss D."/>
            <person name="Nierman W.C."/>
            <person name="White O."/>
            <person name="Eisen J.A."/>
            <person name="Salzberg S.L."/>
            <person name="Fraser C.M."/>
            <person name="Venter J.C."/>
        </authorList>
    </citation>
    <scope>NUCLEOTIDE SEQUENCE [LARGE SCALE GENOMIC DNA]</scope>
    <source>
        <strain>cv. Columbia</strain>
    </source>
</reference>
<reference key="2">
    <citation type="journal article" date="2017" name="Plant J.">
        <title>Araport11: a complete reannotation of the Arabidopsis thaliana reference genome.</title>
        <authorList>
            <person name="Cheng C.Y."/>
            <person name="Krishnakumar V."/>
            <person name="Chan A.P."/>
            <person name="Thibaud-Nissen F."/>
            <person name="Schobel S."/>
            <person name="Town C.D."/>
        </authorList>
    </citation>
    <scope>GENOME REANNOTATION</scope>
    <source>
        <strain>cv. Columbia</strain>
    </source>
</reference>
<reference key="3">
    <citation type="journal article" date="2003" name="Science">
        <title>Empirical analysis of transcriptional activity in the Arabidopsis genome.</title>
        <authorList>
            <person name="Yamada K."/>
            <person name="Lim J."/>
            <person name="Dale J.M."/>
            <person name="Chen H."/>
            <person name="Shinn P."/>
            <person name="Palm C.J."/>
            <person name="Southwick A.M."/>
            <person name="Wu H.C."/>
            <person name="Kim C.J."/>
            <person name="Nguyen M."/>
            <person name="Pham P.K."/>
            <person name="Cheuk R.F."/>
            <person name="Karlin-Newmann G."/>
            <person name="Liu S.X."/>
            <person name="Lam B."/>
            <person name="Sakano H."/>
            <person name="Wu T."/>
            <person name="Yu G."/>
            <person name="Miranda M."/>
            <person name="Quach H.L."/>
            <person name="Tripp M."/>
            <person name="Chang C.H."/>
            <person name="Lee J.M."/>
            <person name="Toriumi M.J."/>
            <person name="Chan M.M."/>
            <person name="Tang C.C."/>
            <person name="Onodera C.S."/>
            <person name="Deng J.M."/>
            <person name="Akiyama K."/>
            <person name="Ansari Y."/>
            <person name="Arakawa T."/>
            <person name="Banh J."/>
            <person name="Banno F."/>
            <person name="Bowser L."/>
            <person name="Brooks S.Y."/>
            <person name="Carninci P."/>
            <person name="Chao Q."/>
            <person name="Choy N."/>
            <person name="Enju A."/>
            <person name="Goldsmith A.D."/>
            <person name="Gurjal M."/>
            <person name="Hansen N.F."/>
            <person name="Hayashizaki Y."/>
            <person name="Johnson-Hopson C."/>
            <person name="Hsuan V.W."/>
            <person name="Iida K."/>
            <person name="Karnes M."/>
            <person name="Khan S."/>
            <person name="Koesema E."/>
            <person name="Ishida J."/>
            <person name="Jiang P.X."/>
            <person name="Jones T."/>
            <person name="Kawai J."/>
            <person name="Kamiya A."/>
            <person name="Meyers C."/>
            <person name="Nakajima M."/>
            <person name="Narusaka M."/>
            <person name="Seki M."/>
            <person name="Sakurai T."/>
            <person name="Satou M."/>
            <person name="Tamse R."/>
            <person name="Vaysberg M."/>
            <person name="Wallender E.K."/>
            <person name="Wong C."/>
            <person name="Yamamura Y."/>
            <person name="Yuan S."/>
            <person name="Shinozaki K."/>
            <person name="Davis R.W."/>
            <person name="Theologis A."/>
            <person name="Ecker J.R."/>
        </authorList>
    </citation>
    <scope>NUCLEOTIDE SEQUENCE [LARGE SCALE MRNA] (ISOFORM 1)</scope>
    <source>
        <strain>cv. Columbia</strain>
    </source>
</reference>
<reference key="4">
    <citation type="submission" date="2002-03" db="EMBL/GenBank/DDBJ databases">
        <title>Full-length cDNA from Arabidopsis thaliana.</title>
        <authorList>
            <person name="Brover V.V."/>
            <person name="Troukhan M.E."/>
            <person name="Alexandrov N.A."/>
            <person name="Lu Y.-P."/>
            <person name="Flavell R.B."/>
            <person name="Feldmann K.A."/>
        </authorList>
    </citation>
    <scope>NUCLEOTIDE SEQUENCE [LARGE SCALE MRNA] (ISOFORM 1)</scope>
</reference>
<reference key="5">
    <citation type="submission" date="2006-07" db="EMBL/GenBank/DDBJ databases">
        <title>Large-scale analysis of RIKEN Arabidopsis full-length (RAFL) cDNAs.</title>
        <authorList>
            <person name="Totoki Y."/>
            <person name="Seki M."/>
            <person name="Ishida J."/>
            <person name="Nakajima M."/>
            <person name="Enju A."/>
            <person name="Kamiya A."/>
            <person name="Narusaka M."/>
            <person name="Shin-i T."/>
            <person name="Nakagawa M."/>
            <person name="Sakamoto N."/>
            <person name="Oishi K."/>
            <person name="Kohara Y."/>
            <person name="Kobayashi M."/>
            <person name="Toyoda A."/>
            <person name="Sakaki Y."/>
            <person name="Sakurai T."/>
            <person name="Iida K."/>
            <person name="Akiyama K."/>
            <person name="Satou M."/>
            <person name="Toyoda T."/>
            <person name="Konagaya A."/>
            <person name="Carninci P."/>
            <person name="Kawai J."/>
            <person name="Hayashizaki Y."/>
            <person name="Shinozaki K."/>
        </authorList>
    </citation>
    <scope>NUCLEOTIDE SEQUENCE [LARGE SCALE MRNA] (ISOFORM 1)</scope>
    <source>
        <strain>cv. Columbia</strain>
    </source>
</reference>
<reference key="6">
    <citation type="journal article" date="2004" name="Nature">
        <title>A proteoglycan mediates inductive interaction during plant vascular development.</title>
        <authorList>
            <person name="Motose H."/>
            <person name="Sugiyama M."/>
            <person name="Fukuda H."/>
        </authorList>
    </citation>
    <scope>FUNCTION</scope>
    <scope>DISRUPTION PHENOTYPE</scope>
</reference>
<reference key="7">
    <citation type="journal article" date="2011" name="Plant Cell Physiol.">
        <title>Expression and genome-wide analysis of the xylogen-type gene family.</title>
        <authorList>
            <person name="Kobayashi Y."/>
            <person name="Motose H."/>
            <person name="Iwamoto K."/>
            <person name="Fukuda H."/>
        </authorList>
    </citation>
    <scope>FUNCTION</scope>
    <scope>TISSUE SPECIFICITY</scope>
    <scope>DEVELOPMENTAL STAGE</scope>
    <scope>GENE FAMILY</scope>
    <scope>NOMENCLATURE</scope>
    <source>
        <strain>cv. Columbia</strain>
    </source>
</reference>
<reference key="8">
    <citation type="journal article" date="2013" name="Plant Mol. Biol.">
        <title>Coexpression patterns indicate that GPI-anchored non-specific lipid transfer proteins are involved in accumulation of cuticular wax, suberin and sporopollenin.</title>
        <authorList>
            <person name="Edstam M.M."/>
            <person name="Blomqvist K."/>
            <person name="Ekloef A."/>
            <person name="Wennergren U."/>
            <person name="Edqvist J."/>
        </authorList>
    </citation>
    <scope>GENE FAMILY</scope>
    <scope>NOMENCLATURE</scope>
    <source>
        <strain>cv. Columbia</strain>
    </source>
</reference>
<accession>Q9ZQI8</accession>
<accession>Q3EC14</accession>
<accession>Q84WL8</accession>
<proteinExistence type="evidence at transcript level"/>